<keyword id="KW-0963">Cytoplasm</keyword>
<keyword id="KW-0460">Magnesium</keyword>
<keyword id="KW-0479">Metal-binding</keyword>
<keyword id="KW-0548">Nucleotidyltransferase</keyword>
<keyword id="KW-1185">Reference proteome</keyword>
<keyword id="KW-0694">RNA-binding</keyword>
<keyword id="KW-0808">Transferase</keyword>
<proteinExistence type="inferred from homology"/>
<gene>
    <name evidence="1" type="primary">pnp2</name>
    <name type="ordered locus">Amet_1006</name>
</gene>
<name>PNP2_ALKMQ</name>
<organism>
    <name type="scientific">Alkaliphilus metalliredigens (strain QYMF)</name>
    <dbReference type="NCBI Taxonomy" id="293826"/>
    <lineage>
        <taxon>Bacteria</taxon>
        <taxon>Bacillati</taxon>
        <taxon>Bacillota</taxon>
        <taxon>Clostridia</taxon>
        <taxon>Peptostreptococcales</taxon>
        <taxon>Natronincolaceae</taxon>
        <taxon>Alkaliphilus</taxon>
    </lineage>
</organism>
<protein>
    <recommendedName>
        <fullName evidence="1">Polyribonucleotide nucleotidyltransferase 2</fullName>
        <ecNumber evidence="1">2.7.7.8</ecNumber>
    </recommendedName>
    <alternativeName>
        <fullName evidence="1">Polynucleotide phosphorylase 2</fullName>
        <shortName evidence="1">PNPase 2</shortName>
    </alternativeName>
</protein>
<feature type="chain" id="PRO_0000329492" description="Polyribonucleotide nucleotidyltransferase 2">
    <location>
        <begin position="1"/>
        <end position="702"/>
    </location>
</feature>
<feature type="domain" description="KH" evidence="1">
    <location>
        <begin position="550"/>
        <end position="609"/>
    </location>
</feature>
<feature type="domain" description="S1 motif" evidence="1">
    <location>
        <begin position="619"/>
        <end position="687"/>
    </location>
</feature>
<feature type="binding site" evidence="1">
    <location>
        <position position="483"/>
    </location>
    <ligand>
        <name>Mg(2+)</name>
        <dbReference type="ChEBI" id="CHEBI:18420"/>
    </ligand>
</feature>
<feature type="binding site" evidence="1">
    <location>
        <position position="489"/>
    </location>
    <ligand>
        <name>Mg(2+)</name>
        <dbReference type="ChEBI" id="CHEBI:18420"/>
    </ligand>
</feature>
<comment type="function">
    <text evidence="1">Involved in mRNA degradation. Catalyzes the phosphorolysis of single-stranded polyribonucleotides processively in the 3'- to 5'-direction.</text>
</comment>
<comment type="catalytic activity">
    <reaction evidence="1">
        <text>RNA(n+1) + phosphate = RNA(n) + a ribonucleoside 5'-diphosphate</text>
        <dbReference type="Rhea" id="RHEA:22096"/>
        <dbReference type="Rhea" id="RHEA-COMP:14527"/>
        <dbReference type="Rhea" id="RHEA-COMP:17342"/>
        <dbReference type="ChEBI" id="CHEBI:43474"/>
        <dbReference type="ChEBI" id="CHEBI:57930"/>
        <dbReference type="ChEBI" id="CHEBI:140395"/>
        <dbReference type="EC" id="2.7.7.8"/>
    </reaction>
</comment>
<comment type="cofactor">
    <cofactor evidence="1">
        <name>Mg(2+)</name>
        <dbReference type="ChEBI" id="CHEBI:18420"/>
    </cofactor>
</comment>
<comment type="subcellular location">
    <subcellularLocation>
        <location evidence="1">Cytoplasm</location>
    </subcellularLocation>
</comment>
<comment type="similarity">
    <text evidence="1">Belongs to the polyribonucleotide nucleotidyltransferase family.</text>
</comment>
<accession>A6TM05</accession>
<evidence type="ECO:0000255" key="1">
    <source>
        <dbReference type="HAMAP-Rule" id="MF_01595"/>
    </source>
</evidence>
<dbReference type="EC" id="2.7.7.8" evidence="1"/>
<dbReference type="EMBL" id="CP000724">
    <property type="protein sequence ID" value="ABR47223.1"/>
    <property type="molecule type" value="Genomic_DNA"/>
</dbReference>
<dbReference type="RefSeq" id="WP_012062265.1">
    <property type="nucleotide sequence ID" value="NC_009633.1"/>
</dbReference>
<dbReference type="SMR" id="A6TM05"/>
<dbReference type="STRING" id="293826.Amet_1006"/>
<dbReference type="KEGG" id="amt:Amet_1006"/>
<dbReference type="eggNOG" id="COG1185">
    <property type="taxonomic scope" value="Bacteria"/>
</dbReference>
<dbReference type="HOGENOM" id="CLU_004217_2_2_9"/>
<dbReference type="OrthoDB" id="9804305at2"/>
<dbReference type="Proteomes" id="UP000001572">
    <property type="component" value="Chromosome"/>
</dbReference>
<dbReference type="GO" id="GO:0005829">
    <property type="term" value="C:cytosol"/>
    <property type="evidence" value="ECO:0007669"/>
    <property type="project" value="TreeGrafter"/>
</dbReference>
<dbReference type="GO" id="GO:0000175">
    <property type="term" value="F:3'-5'-RNA exonuclease activity"/>
    <property type="evidence" value="ECO:0007669"/>
    <property type="project" value="TreeGrafter"/>
</dbReference>
<dbReference type="GO" id="GO:0000287">
    <property type="term" value="F:magnesium ion binding"/>
    <property type="evidence" value="ECO:0007669"/>
    <property type="project" value="UniProtKB-UniRule"/>
</dbReference>
<dbReference type="GO" id="GO:0004654">
    <property type="term" value="F:polyribonucleotide nucleotidyltransferase activity"/>
    <property type="evidence" value="ECO:0007669"/>
    <property type="project" value="UniProtKB-UniRule"/>
</dbReference>
<dbReference type="GO" id="GO:0003723">
    <property type="term" value="F:RNA binding"/>
    <property type="evidence" value="ECO:0007669"/>
    <property type="project" value="UniProtKB-UniRule"/>
</dbReference>
<dbReference type="GO" id="GO:0006402">
    <property type="term" value="P:mRNA catabolic process"/>
    <property type="evidence" value="ECO:0007669"/>
    <property type="project" value="UniProtKB-UniRule"/>
</dbReference>
<dbReference type="GO" id="GO:0006396">
    <property type="term" value="P:RNA processing"/>
    <property type="evidence" value="ECO:0007669"/>
    <property type="project" value="InterPro"/>
</dbReference>
<dbReference type="CDD" id="cd02393">
    <property type="entry name" value="KH-I_PNPase"/>
    <property type="match status" value="1"/>
</dbReference>
<dbReference type="CDD" id="cd11363">
    <property type="entry name" value="RNase_PH_PNPase_1"/>
    <property type="match status" value="1"/>
</dbReference>
<dbReference type="CDD" id="cd11364">
    <property type="entry name" value="RNase_PH_PNPase_2"/>
    <property type="match status" value="1"/>
</dbReference>
<dbReference type="CDD" id="cd04472">
    <property type="entry name" value="S1_PNPase"/>
    <property type="match status" value="1"/>
</dbReference>
<dbReference type="FunFam" id="2.40.50.140:FF:000023">
    <property type="entry name" value="Polyribonucleotide nucleotidyltransferase"/>
    <property type="match status" value="1"/>
</dbReference>
<dbReference type="FunFam" id="3.30.1370.10:FF:000001">
    <property type="entry name" value="Polyribonucleotide nucleotidyltransferase"/>
    <property type="match status" value="1"/>
</dbReference>
<dbReference type="FunFam" id="3.30.230.70:FF:000001">
    <property type="entry name" value="Polyribonucleotide nucleotidyltransferase"/>
    <property type="match status" value="1"/>
</dbReference>
<dbReference type="FunFam" id="3.30.230.70:FF:000002">
    <property type="entry name" value="Polyribonucleotide nucleotidyltransferase"/>
    <property type="match status" value="1"/>
</dbReference>
<dbReference type="Gene3D" id="3.30.230.70">
    <property type="entry name" value="GHMP Kinase, N-terminal domain"/>
    <property type="match status" value="2"/>
</dbReference>
<dbReference type="Gene3D" id="3.30.1370.10">
    <property type="entry name" value="K Homology domain, type 1"/>
    <property type="match status" value="1"/>
</dbReference>
<dbReference type="Gene3D" id="2.40.50.140">
    <property type="entry name" value="Nucleic acid-binding proteins"/>
    <property type="match status" value="1"/>
</dbReference>
<dbReference type="HAMAP" id="MF_01595">
    <property type="entry name" value="PNPase"/>
    <property type="match status" value="1"/>
</dbReference>
<dbReference type="InterPro" id="IPR001247">
    <property type="entry name" value="ExoRNase_PH_dom1"/>
</dbReference>
<dbReference type="InterPro" id="IPR015847">
    <property type="entry name" value="ExoRNase_PH_dom2"/>
</dbReference>
<dbReference type="InterPro" id="IPR036345">
    <property type="entry name" value="ExoRNase_PH_dom2_sf"/>
</dbReference>
<dbReference type="InterPro" id="IPR004087">
    <property type="entry name" value="KH_dom"/>
</dbReference>
<dbReference type="InterPro" id="IPR004088">
    <property type="entry name" value="KH_dom_type_1"/>
</dbReference>
<dbReference type="InterPro" id="IPR036612">
    <property type="entry name" value="KH_dom_type_1_sf"/>
</dbReference>
<dbReference type="InterPro" id="IPR012340">
    <property type="entry name" value="NA-bd_OB-fold"/>
</dbReference>
<dbReference type="InterPro" id="IPR012162">
    <property type="entry name" value="PNPase"/>
</dbReference>
<dbReference type="InterPro" id="IPR027408">
    <property type="entry name" value="PNPase/RNase_PH_dom_sf"/>
</dbReference>
<dbReference type="InterPro" id="IPR015848">
    <property type="entry name" value="PNPase_PH_RNA-bd_bac/org-type"/>
</dbReference>
<dbReference type="InterPro" id="IPR036456">
    <property type="entry name" value="PNPase_PH_RNA-bd_sf"/>
</dbReference>
<dbReference type="InterPro" id="IPR020568">
    <property type="entry name" value="Ribosomal_Su5_D2-typ_SF"/>
</dbReference>
<dbReference type="InterPro" id="IPR003029">
    <property type="entry name" value="S1_domain"/>
</dbReference>
<dbReference type="NCBIfam" id="TIGR03591">
    <property type="entry name" value="polynuc_phos"/>
    <property type="match status" value="1"/>
</dbReference>
<dbReference type="NCBIfam" id="NF008805">
    <property type="entry name" value="PRK11824.1"/>
    <property type="match status" value="1"/>
</dbReference>
<dbReference type="PANTHER" id="PTHR11252">
    <property type="entry name" value="POLYRIBONUCLEOTIDE NUCLEOTIDYLTRANSFERASE"/>
    <property type="match status" value="1"/>
</dbReference>
<dbReference type="PANTHER" id="PTHR11252:SF0">
    <property type="entry name" value="POLYRIBONUCLEOTIDE NUCLEOTIDYLTRANSFERASE 1, MITOCHONDRIAL"/>
    <property type="match status" value="1"/>
</dbReference>
<dbReference type="Pfam" id="PF00013">
    <property type="entry name" value="KH_1"/>
    <property type="match status" value="1"/>
</dbReference>
<dbReference type="Pfam" id="PF03726">
    <property type="entry name" value="PNPase"/>
    <property type="match status" value="1"/>
</dbReference>
<dbReference type="Pfam" id="PF01138">
    <property type="entry name" value="RNase_PH"/>
    <property type="match status" value="2"/>
</dbReference>
<dbReference type="Pfam" id="PF03725">
    <property type="entry name" value="RNase_PH_C"/>
    <property type="match status" value="2"/>
</dbReference>
<dbReference type="Pfam" id="PF00575">
    <property type="entry name" value="S1"/>
    <property type="match status" value="1"/>
</dbReference>
<dbReference type="PIRSF" id="PIRSF005499">
    <property type="entry name" value="PNPase"/>
    <property type="match status" value="1"/>
</dbReference>
<dbReference type="SMART" id="SM00322">
    <property type="entry name" value="KH"/>
    <property type="match status" value="1"/>
</dbReference>
<dbReference type="SMART" id="SM00316">
    <property type="entry name" value="S1"/>
    <property type="match status" value="1"/>
</dbReference>
<dbReference type="SUPFAM" id="SSF54791">
    <property type="entry name" value="Eukaryotic type KH-domain (KH-domain type I)"/>
    <property type="match status" value="1"/>
</dbReference>
<dbReference type="SUPFAM" id="SSF50249">
    <property type="entry name" value="Nucleic acid-binding proteins"/>
    <property type="match status" value="1"/>
</dbReference>
<dbReference type="SUPFAM" id="SSF46915">
    <property type="entry name" value="Polynucleotide phosphorylase/guanosine pentaphosphate synthase (PNPase/GPSI), domain 3"/>
    <property type="match status" value="1"/>
</dbReference>
<dbReference type="SUPFAM" id="SSF55666">
    <property type="entry name" value="Ribonuclease PH domain 2-like"/>
    <property type="match status" value="2"/>
</dbReference>
<dbReference type="SUPFAM" id="SSF54211">
    <property type="entry name" value="Ribosomal protein S5 domain 2-like"/>
    <property type="match status" value="2"/>
</dbReference>
<dbReference type="PROSITE" id="PS50084">
    <property type="entry name" value="KH_TYPE_1"/>
    <property type="match status" value="1"/>
</dbReference>
<dbReference type="PROSITE" id="PS50126">
    <property type="entry name" value="S1"/>
    <property type="match status" value="1"/>
</dbReference>
<sequence>MIRTFEMELGGRPFVVELGKVAELAQGSCMIKYGDTFVLVTACASKEPKEGLDFFPLSCDYEEKLYAVGKIPGGFIKRESRPSEKATLTARLIDRPIRPLFPKGYHNDVQVIATVLSVDQDCPPDISAMIGSSIALSVSNIPFMGPTASVSVGMIDGKYIVNPTSEQKELSELELIVSGTKDAVMMIEAGANELTEAQILDAIMFAHEEIKKIVTFIEHIVSEVGKPKSEVIVKETDSELLAEVVSFLDTKLANAIKTVDKTERNENIKAISAEALDYFEEKYEGRSKEVNTILSKQIKVETRKMITSEGIRPDNRKLDEIRPISSEVGILPRTHGTGLFTRGETQVLTVTTLGDLRDAQRIDGLGEEDEKRYMHHYNFPPYSVGETRFMRGPSRREIGHGALVERALKPMIPCKEDFPYAIRLVSEVLACNGSSSQASVCGSTLSLMDAGVPIKGMVAGIAMGLIKEEGQIAILSDIQGMEDALGDMDLKVAGTENGITALQMDIKIAGIDRNIMETALAQAKIGRTHILNKMKEAITSPRTELSAYAPQVTKLKVHPDKVREVIGAGGKVINKIIDETGVKINIENDGTIYIAAPDQESARVALEMIELIVKDPVVGEVYTGKVIKIMDFGAFVEILPGKEGLVHISNLAHERVAKVADVLAEGDLIEVKLMEINPQGKIGLSRKALLPKPEKEAPKKIE</sequence>
<reference key="1">
    <citation type="journal article" date="2016" name="Genome Announc.">
        <title>Complete genome sequence of Alkaliphilus metalliredigens strain QYMF, an alkaliphilic and metal-reducing bacterium isolated from borax-contaminated leachate ponds.</title>
        <authorList>
            <person name="Hwang C."/>
            <person name="Copeland A."/>
            <person name="Lucas S."/>
            <person name="Lapidus A."/>
            <person name="Barry K."/>
            <person name="Detter J.C."/>
            <person name="Glavina Del Rio T."/>
            <person name="Hammon N."/>
            <person name="Israni S."/>
            <person name="Dalin E."/>
            <person name="Tice H."/>
            <person name="Pitluck S."/>
            <person name="Chertkov O."/>
            <person name="Brettin T."/>
            <person name="Bruce D."/>
            <person name="Han C."/>
            <person name="Schmutz J."/>
            <person name="Larimer F."/>
            <person name="Land M.L."/>
            <person name="Hauser L."/>
            <person name="Kyrpides N."/>
            <person name="Mikhailova N."/>
            <person name="Ye Q."/>
            <person name="Zhou J."/>
            <person name="Richardson P."/>
            <person name="Fields M.W."/>
        </authorList>
    </citation>
    <scope>NUCLEOTIDE SEQUENCE [LARGE SCALE GENOMIC DNA]</scope>
    <source>
        <strain>QYMF</strain>
    </source>
</reference>